<name>ATR_ORYSI</name>
<keyword id="KW-0067">ATP-binding</keyword>
<keyword id="KW-0131">Cell cycle</keyword>
<keyword id="KW-0227">DNA damage</keyword>
<keyword id="KW-0234">DNA repair</keyword>
<keyword id="KW-0418">Kinase</keyword>
<keyword id="KW-0547">Nucleotide-binding</keyword>
<keyword id="KW-0539">Nucleus</keyword>
<keyword id="KW-1185">Reference proteome</keyword>
<keyword id="KW-0723">Serine/threonine-protein kinase</keyword>
<keyword id="KW-0808">Transferase</keyword>
<accession>A2YH41</accession>
<organism>
    <name type="scientific">Oryza sativa subsp. indica</name>
    <name type="common">Rice</name>
    <dbReference type="NCBI Taxonomy" id="39946"/>
    <lineage>
        <taxon>Eukaryota</taxon>
        <taxon>Viridiplantae</taxon>
        <taxon>Streptophyta</taxon>
        <taxon>Embryophyta</taxon>
        <taxon>Tracheophyta</taxon>
        <taxon>Spermatophyta</taxon>
        <taxon>Magnoliopsida</taxon>
        <taxon>Liliopsida</taxon>
        <taxon>Poales</taxon>
        <taxon>Poaceae</taxon>
        <taxon>BOP clade</taxon>
        <taxon>Oryzoideae</taxon>
        <taxon>Oryzeae</taxon>
        <taxon>Oryzinae</taxon>
        <taxon>Oryza</taxon>
        <taxon>Oryza sativa</taxon>
    </lineage>
</organism>
<evidence type="ECO:0000250" key="1"/>
<evidence type="ECO:0000255" key="2">
    <source>
        <dbReference type="PROSITE-ProRule" id="PRU00269"/>
    </source>
</evidence>
<evidence type="ECO:0000255" key="3">
    <source>
        <dbReference type="PROSITE-ProRule" id="PRU00534"/>
    </source>
</evidence>
<evidence type="ECO:0000255" key="4">
    <source>
        <dbReference type="PROSITE-ProRule" id="PRU00535"/>
    </source>
</evidence>
<evidence type="ECO:0000305" key="5"/>
<sequence length="2710" mass="303493">MANFSSHIQELRELIAASSTTTSTSAPASVHFEVKLREVLPNLLRDYVVPSSPTADGREATAVLKLLSYTAGKFPGVFFHGRAADVIRVIGRVLPFFAEPNFRSRHEIIFDTVWSLLSLLRTGDREAYRQFFLDVMVAVQDVLYVVASMHGDRPSGVLTERYLVKCLCGSFSDILDSPGIFSDLPDSCQPKNGPGVLVDLTGETRWRPFATMLIKLVNKCLADGTLYVEGLVNMPFVSAACSIICYGDESLHKVCFDFARIVATVITVEILPVENIIRSIMCILSQDVNGLSDIRDADYDFSMGACLHALHSSCPGYIVAITASDIVNVFQRAVHTSRSSELQVAMCNAYKRIVELCSPRVWKPEILLKLLCLPKPCAKLIECIRLVVDKSGQSFLSSDDRDDGSSLLAKSEGLDLPKVGQKRIALDEENSFPKRLKMTEPRFSSGSFMVDELSAGVGQELEKDHGCDFRVQLYSLINCLSPDNHMAYPLEPAIAIQVLSLLCLSLSVYPKTNLFSRISKQVLSWIPWICKQTTKICMFSFDVSLYFEAVQTVMLLQSFLPGHTKLFEDEPLLIGNGCTDFEYPRYADLINLLKLVSDDGYLTSQTCSEKLKCLAVQIIAKIGSRQNAECDLQVLELAIQSETGELQNEALMSLPIIVLYSGPRMLGAMFRKLETIGTLGCKKLWKSIAISLGFLSCLNGTTDCTDKVGNHCKLFLAKHCEQPILTLNLLRGFWCPQCDVRTVHIEDQVPIVDIALSEDKNIDFKINMFKAHSLFFKFLYAETSEECIVSIVEVLPRILKHSSRDVLLDMKFQWVQCVDFLLLHEMKAVRDAFSSVVSCFLETNAMDILFSDGTGMSGGTSRVKFMDKIKSAFTEAEDPQILLTLLESTAAIVKASDIHGEVFFCSFVLLIGQLGNHDYIVRVTALRLLQRCCTYCFKGGLELFLSKYFHVRDNLYDYLSSRLLTHPVVISEFAESVLGVKTEELIRRMVPSIIPKLIVSHQNNDQAVVTLNELASHLNSELVPLIVNSLPKVLSFALFYEDGQHLSSVLQFYHTETGTDSKEIFSAALPTLLDEIICFPGESDQIETDRRMAKISPTIQNIARILIGNDNLPEFLKNDFVRLLNSIDKKMLHSSDVNLQKQALQRIRKLVEMMGPYLSTHAPKIMVLLIFAIDKETLQMDGLDVLHFFIKRLAEVSCTSIKYVMSQVVAAFIPSLERCRERPLVHLGKIVEILEELVVKNIILLKQHIRELPLLPSLPSLSGVNKVIQEARGLMTLQDHLKDAVNGLNHESLNVRYMVACELNKLFNDRREDITSLIIGEDIADLDIISSLIMSLLKGCAEESRTVVGQRLKLVCADCLGALGAVDPAKFKVMSCERFKIECSDDDLIFELIHKHLARAFRAASDTTVQDSAALAIQELLKLSGCQSLPNESSSCKMSKRGQKLWGRFSSYVKEIIAPCLTSRFHLPSVNDATLAGPIYRPTMSFRRWIYYWIRKLTSHATGSRSGIFGACRGIVRHDMPTAIYLLPYLVLNVVCYGTPEARQSITEEILSVLNAAASESSGAIVHGITGGQSEVCIQAVFTLLDNLGQWVDDLKQEIALSQSNYAMAGRQGGKLRDESNSMYDQDQLLVQCSNVAELLAAIPKVTLAKASFRCQAHARALMYFESHVREKSGSSNPAADCSGAFSDDDISFLMEIYGGLDEPDGLLGLANLRKSSTLQDQLIINEKAGNWAEVLTLCEQSLQMEPDSVHRHCDVLNCLLNMCHLQAMIAHVDGLVYRIPQSKKTWCMQGVQAAWRLGRWDLMDEYLAEADKGLVCRSSENNASFDMGLAKIFNAMMKKDQFMVAEKIAQSKQALLVPLAAAGMDSYMRAYPYIVKLHMLRELEDFNSLLGDESFLEKPFAADDPKFLKLTKDWENRLRCTQPSLWAREPLLAFRRMVYNLSHMNAQAGNCWLQYARLCRLAGHYETAHRAILEADASGAPNAHMEKAKYLWNIRKSDSAIAELQQTLLNMPADVLGPTVLSSLSSLSLALPNAPLSVTQASKENPDVSKTLLLYTRWIHYTGQKQSNDIKSLYSRVADLRPKWEKGFFCIAKFYDDLLVDARRRQEDKKIASGVGPVPPSSTGSLTTATEEKPWWDMLPVVLIQYARGLHRGHKNLFQALPRLLTLWFEFGSIYIQDGSSFNKPMKEVHIRLLGIMRGCLKDLPPYQWLTVLSQLISRICHQNIEVVKLVKCIVTSILREYPQQALWMMAAVSKSTVAARRDAAAEILQSAKKGSRRGSDSNALFMQFPSLIDHLIKLCFHPGQPKARAINISTEFSSLKRMMPLGIILPIQQALTVTLPSYDTNMTDQSTFRPFSVSEHPTIAGIADDAEILNSLQKPKKVVFIGSDGISRPFLCKPKDDLRKDSRMMEFNAMINRLLSKVPESRRRKLYIRTFAVVPLTEDCGMVEWVPNTRGLRQILQDIYITCGKFDRMKTNPQIKKIYDQLQGKMPEEMLKAKILPMFPPVFHKWFLTTFSEPAAWIRARAAYAHTTAVWSMVGHIVGLGDRHGENILLDSTTGDCIHVDFSCLFDKGLLLEKPEVVPFRFTQNMVDGLGITGYEGVFVKVCEITLSVLRTHKEALMTVLETFIHDPLVEWTKSHKSSGVEVRNPHAQRAISNITERLQGVVVGVNAAPSLPLSVEGQARRLIAEAVSHSNLGKMYVWWMAWF</sequence>
<gene>
    <name type="ORF">OsI_023634</name>
</gene>
<reference key="1">
    <citation type="journal article" date="2005" name="PLoS Biol.">
        <title>The genomes of Oryza sativa: a history of duplications.</title>
        <authorList>
            <person name="Yu J."/>
            <person name="Wang J."/>
            <person name="Lin W."/>
            <person name="Li S."/>
            <person name="Li H."/>
            <person name="Zhou J."/>
            <person name="Ni P."/>
            <person name="Dong W."/>
            <person name="Hu S."/>
            <person name="Zeng C."/>
            <person name="Zhang J."/>
            <person name="Zhang Y."/>
            <person name="Li R."/>
            <person name="Xu Z."/>
            <person name="Li S."/>
            <person name="Li X."/>
            <person name="Zheng H."/>
            <person name="Cong L."/>
            <person name="Lin L."/>
            <person name="Yin J."/>
            <person name="Geng J."/>
            <person name="Li G."/>
            <person name="Shi J."/>
            <person name="Liu J."/>
            <person name="Lv H."/>
            <person name="Li J."/>
            <person name="Wang J."/>
            <person name="Deng Y."/>
            <person name="Ran L."/>
            <person name="Shi X."/>
            <person name="Wang X."/>
            <person name="Wu Q."/>
            <person name="Li C."/>
            <person name="Ren X."/>
            <person name="Wang J."/>
            <person name="Wang X."/>
            <person name="Li D."/>
            <person name="Liu D."/>
            <person name="Zhang X."/>
            <person name="Ji Z."/>
            <person name="Zhao W."/>
            <person name="Sun Y."/>
            <person name="Zhang Z."/>
            <person name="Bao J."/>
            <person name="Han Y."/>
            <person name="Dong L."/>
            <person name="Ji J."/>
            <person name="Chen P."/>
            <person name="Wu S."/>
            <person name="Liu J."/>
            <person name="Xiao Y."/>
            <person name="Bu D."/>
            <person name="Tan J."/>
            <person name="Yang L."/>
            <person name="Ye C."/>
            <person name="Zhang J."/>
            <person name="Xu J."/>
            <person name="Zhou Y."/>
            <person name="Yu Y."/>
            <person name="Zhang B."/>
            <person name="Zhuang S."/>
            <person name="Wei H."/>
            <person name="Liu B."/>
            <person name="Lei M."/>
            <person name="Yu H."/>
            <person name="Li Y."/>
            <person name="Xu H."/>
            <person name="Wei S."/>
            <person name="He X."/>
            <person name="Fang L."/>
            <person name="Zhang Z."/>
            <person name="Zhang Y."/>
            <person name="Huang X."/>
            <person name="Su Z."/>
            <person name="Tong W."/>
            <person name="Li J."/>
            <person name="Tong Z."/>
            <person name="Li S."/>
            <person name="Ye J."/>
            <person name="Wang L."/>
            <person name="Fang L."/>
            <person name="Lei T."/>
            <person name="Chen C.-S."/>
            <person name="Chen H.-C."/>
            <person name="Xu Z."/>
            <person name="Li H."/>
            <person name="Huang H."/>
            <person name="Zhang F."/>
            <person name="Xu H."/>
            <person name="Li N."/>
            <person name="Zhao C."/>
            <person name="Li S."/>
            <person name="Dong L."/>
            <person name="Huang Y."/>
            <person name="Li L."/>
            <person name="Xi Y."/>
            <person name="Qi Q."/>
            <person name="Li W."/>
            <person name="Zhang B."/>
            <person name="Hu W."/>
            <person name="Zhang Y."/>
            <person name="Tian X."/>
            <person name="Jiao Y."/>
            <person name="Liang X."/>
            <person name="Jin J."/>
            <person name="Gao L."/>
            <person name="Zheng W."/>
            <person name="Hao B."/>
            <person name="Liu S.-M."/>
            <person name="Wang W."/>
            <person name="Yuan L."/>
            <person name="Cao M."/>
            <person name="McDermott J."/>
            <person name="Samudrala R."/>
            <person name="Wang J."/>
            <person name="Wong G.K.-S."/>
            <person name="Yang H."/>
        </authorList>
    </citation>
    <scope>NUCLEOTIDE SEQUENCE [LARGE SCALE GENOMIC DNA]</scope>
    <source>
        <strain>cv. 93-11</strain>
    </source>
</reference>
<proteinExistence type="inferred from homology"/>
<comment type="function">
    <text evidence="1">Probable serine/threonine kinase. Seems to play a central role in cell-cycle regulation by transmitting DNA damage signals to downstream effectors of cell-cycle progression. May recognize the substrate consensus sequence [ST]-Q and phosphorylate histone variant H2AX to form H2AXS139ph at sites of DNA damage, thereby regulating DNA damage response mechanism (By similarity).</text>
</comment>
<comment type="catalytic activity">
    <reaction>
        <text>L-seryl-[protein] + ATP = O-phospho-L-seryl-[protein] + ADP + H(+)</text>
        <dbReference type="Rhea" id="RHEA:17989"/>
        <dbReference type="Rhea" id="RHEA-COMP:9863"/>
        <dbReference type="Rhea" id="RHEA-COMP:11604"/>
        <dbReference type="ChEBI" id="CHEBI:15378"/>
        <dbReference type="ChEBI" id="CHEBI:29999"/>
        <dbReference type="ChEBI" id="CHEBI:30616"/>
        <dbReference type="ChEBI" id="CHEBI:83421"/>
        <dbReference type="ChEBI" id="CHEBI:456216"/>
        <dbReference type="EC" id="2.7.11.1"/>
    </reaction>
</comment>
<comment type="catalytic activity">
    <reaction>
        <text>L-threonyl-[protein] + ATP = O-phospho-L-threonyl-[protein] + ADP + H(+)</text>
        <dbReference type="Rhea" id="RHEA:46608"/>
        <dbReference type="Rhea" id="RHEA-COMP:11060"/>
        <dbReference type="Rhea" id="RHEA-COMP:11605"/>
        <dbReference type="ChEBI" id="CHEBI:15378"/>
        <dbReference type="ChEBI" id="CHEBI:30013"/>
        <dbReference type="ChEBI" id="CHEBI:30616"/>
        <dbReference type="ChEBI" id="CHEBI:61977"/>
        <dbReference type="ChEBI" id="CHEBI:456216"/>
        <dbReference type="EC" id="2.7.11.1"/>
    </reaction>
</comment>
<comment type="subcellular location">
    <subcellularLocation>
        <location evidence="5">Nucleus</location>
    </subcellularLocation>
</comment>
<comment type="similarity">
    <text evidence="5">Belongs to the PI3/PI4-kinase family. ATM subfamily.</text>
</comment>
<feature type="chain" id="PRO_0000295895" description="Serine/threonine-protein kinase ATR">
    <location>
        <begin position="1"/>
        <end position="2710"/>
    </location>
</feature>
<feature type="domain" description="FAT" evidence="3">
    <location>
        <begin position="1647"/>
        <end position="2257"/>
    </location>
</feature>
<feature type="domain" description="PI3K/PI4K catalytic" evidence="2">
    <location>
        <begin position="2368"/>
        <end position="2680"/>
    </location>
</feature>
<feature type="domain" description="FATC" evidence="3 4">
    <location>
        <begin position="2678"/>
        <end position="2710"/>
    </location>
</feature>
<feature type="region of interest" description="G-loop" evidence="2">
    <location>
        <begin position="2374"/>
        <end position="2380"/>
    </location>
</feature>
<feature type="region of interest" description="Catalytic loop" evidence="2">
    <location>
        <begin position="2545"/>
        <end position="2553"/>
    </location>
</feature>
<feature type="region of interest" description="Activation loop" evidence="2">
    <location>
        <begin position="2565"/>
        <end position="2589"/>
    </location>
</feature>
<dbReference type="EC" id="2.7.11.1"/>
<dbReference type="EMBL" id="CM000131">
    <property type="status" value="NOT_ANNOTATED_CDS"/>
    <property type="molecule type" value="Genomic_DNA"/>
</dbReference>
<dbReference type="SMR" id="A2YH41"/>
<dbReference type="STRING" id="39946.A2YH41"/>
<dbReference type="EnsemblPlants" id="OsZS97_06G029720_02">
    <property type="protein sequence ID" value="OsZS97_06G029720_02"/>
    <property type="gene ID" value="OsZS97_06G029720"/>
</dbReference>
<dbReference type="Gramene" id="OsZS97_06G029720_02">
    <property type="protein sequence ID" value="OsZS97_06G029720_02"/>
    <property type="gene ID" value="OsZS97_06G029720"/>
</dbReference>
<dbReference type="Proteomes" id="UP000007015">
    <property type="component" value="Chromosome 6"/>
</dbReference>
<dbReference type="GO" id="GO:0005694">
    <property type="term" value="C:chromosome"/>
    <property type="evidence" value="ECO:0007669"/>
    <property type="project" value="TreeGrafter"/>
</dbReference>
<dbReference type="GO" id="GO:0005634">
    <property type="term" value="C:nucleus"/>
    <property type="evidence" value="ECO:0007669"/>
    <property type="project" value="UniProtKB-SubCell"/>
</dbReference>
<dbReference type="GO" id="GO:0005524">
    <property type="term" value="F:ATP binding"/>
    <property type="evidence" value="ECO:0007669"/>
    <property type="project" value="UniProtKB-KW"/>
</dbReference>
<dbReference type="GO" id="GO:0106310">
    <property type="term" value="F:protein serine kinase activity"/>
    <property type="evidence" value="ECO:0007669"/>
    <property type="project" value="RHEA"/>
</dbReference>
<dbReference type="GO" id="GO:0004674">
    <property type="term" value="F:protein serine/threonine kinase activity"/>
    <property type="evidence" value="ECO:0007669"/>
    <property type="project" value="UniProtKB-KW"/>
</dbReference>
<dbReference type="GO" id="GO:0000077">
    <property type="term" value="P:DNA damage checkpoint signaling"/>
    <property type="evidence" value="ECO:0007669"/>
    <property type="project" value="TreeGrafter"/>
</dbReference>
<dbReference type="GO" id="GO:0006281">
    <property type="term" value="P:DNA repair"/>
    <property type="evidence" value="ECO:0007669"/>
    <property type="project" value="UniProtKB-KW"/>
</dbReference>
<dbReference type="GO" id="GO:0000723">
    <property type="term" value="P:telomere maintenance"/>
    <property type="evidence" value="ECO:0007669"/>
    <property type="project" value="TreeGrafter"/>
</dbReference>
<dbReference type="CDD" id="cd00892">
    <property type="entry name" value="PIKKc_ATR"/>
    <property type="match status" value="1"/>
</dbReference>
<dbReference type="FunFam" id="1.10.1070.11:FF:000024">
    <property type="entry name" value="Serine/threonine-protein kinase ATR"/>
    <property type="match status" value="1"/>
</dbReference>
<dbReference type="FunFam" id="3.30.1010.10:FF:000020">
    <property type="entry name" value="Serine/threonine-protein kinase ATR"/>
    <property type="match status" value="1"/>
</dbReference>
<dbReference type="Gene3D" id="1.10.1070.11">
    <property type="entry name" value="Phosphatidylinositol 3-/4-kinase, catalytic domain"/>
    <property type="match status" value="1"/>
</dbReference>
<dbReference type="Gene3D" id="3.30.1010.10">
    <property type="entry name" value="Phosphatidylinositol 3-kinase Catalytic Subunit, Chain A, domain 4"/>
    <property type="match status" value="1"/>
</dbReference>
<dbReference type="Gene3D" id="1.25.40.10">
    <property type="entry name" value="Tetratricopeptide repeat domain"/>
    <property type="match status" value="1"/>
</dbReference>
<dbReference type="InterPro" id="IPR016024">
    <property type="entry name" value="ARM-type_fold"/>
</dbReference>
<dbReference type="InterPro" id="IPR056802">
    <property type="entry name" value="ATR-like_M-HEAT"/>
</dbReference>
<dbReference type="InterPro" id="IPR050517">
    <property type="entry name" value="DDR_Repair_Kinase"/>
</dbReference>
<dbReference type="InterPro" id="IPR003152">
    <property type="entry name" value="FATC_dom"/>
</dbReference>
<dbReference type="InterPro" id="IPR011009">
    <property type="entry name" value="Kinase-like_dom_sf"/>
</dbReference>
<dbReference type="InterPro" id="IPR000403">
    <property type="entry name" value="PI3/4_kinase_cat_dom"/>
</dbReference>
<dbReference type="InterPro" id="IPR036940">
    <property type="entry name" value="PI3/4_kinase_cat_sf"/>
</dbReference>
<dbReference type="InterPro" id="IPR018936">
    <property type="entry name" value="PI3/4_kinase_CS"/>
</dbReference>
<dbReference type="InterPro" id="IPR003151">
    <property type="entry name" value="PIK-rel_kinase_FAT"/>
</dbReference>
<dbReference type="InterPro" id="IPR014009">
    <property type="entry name" value="PIK_FAT"/>
</dbReference>
<dbReference type="InterPro" id="IPR011990">
    <property type="entry name" value="TPR-like_helical_dom_sf"/>
</dbReference>
<dbReference type="InterPro" id="IPR012993">
    <property type="entry name" value="UME"/>
</dbReference>
<dbReference type="PANTHER" id="PTHR11139">
    <property type="entry name" value="ATAXIA TELANGIECTASIA MUTATED ATM -RELATED"/>
    <property type="match status" value="1"/>
</dbReference>
<dbReference type="PANTHER" id="PTHR11139:SF69">
    <property type="entry name" value="SERINE_THREONINE-PROTEIN KINASE ATR"/>
    <property type="match status" value="1"/>
</dbReference>
<dbReference type="Pfam" id="PF02259">
    <property type="entry name" value="FAT"/>
    <property type="match status" value="1"/>
</dbReference>
<dbReference type="Pfam" id="PF02260">
    <property type="entry name" value="FATC"/>
    <property type="match status" value="1"/>
</dbReference>
<dbReference type="Pfam" id="PF23593">
    <property type="entry name" value="HEAT_ATR"/>
    <property type="match status" value="1"/>
</dbReference>
<dbReference type="Pfam" id="PF25030">
    <property type="entry name" value="M-HEAT_ATR"/>
    <property type="match status" value="1"/>
</dbReference>
<dbReference type="Pfam" id="PF00454">
    <property type="entry name" value="PI3_PI4_kinase"/>
    <property type="match status" value="1"/>
</dbReference>
<dbReference type="Pfam" id="PF08064">
    <property type="entry name" value="UME"/>
    <property type="match status" value="1"/>
</dbReference>
<dbReference type="SMART" id="SM01343">
    <property type="entry name" value="FATC"/>
    <property type="match status" value="1"/>
</dbReference>
<dbReference type="SMART" id="SM00146">
    <property type="entry name" value="PI3Kc"/>
    <property type="match status" value="1"/>
</dbReference>
<dbReference type="SMART" id="SM00802">
    <property type="entry name" value="UME"/>
    <property type="match status" value="1"/>
</dbReference>
<dbReference type="SUPFAM" id="SSF48371">
    <property type="entry name" value="ARM repeat"/>
    <property type="match status" value="1"/>
</dbReference>
<dbReference type="SUPFAM" id="SSF56112">
    <property type="entry name" value="Protein kinase-like (PK-like)"/>
    <property type="match status" value="1"/>
</dbReference>
<dbReference type="PROSITE" id="PS51189">
    <property type="entry name" value="FAT"/>
    <property type="match status" value="1"/>
</dbReference>
<dbReference type="PROSITE" id="PS51190">
    <property type="entry name" value="FATC"/>
    <property type="match status" value="1"/>
</dbReference>
<dbReference type="PROSITE" id="PS00916">
    <property type="entry name" value="PI3_4_KINASE_2"/>
    <property type="match status" value="1"/>
</dbReference>
<dbReference type="PROSITE" id="PS50290">
    <property type="entry name" value="PI3_4_KINASE_3"/>
    <property type="match status" value="1"/>
</dbReference>
<protein>
    <recommendedName>
        <fullName>Serine/threonine-protein kinase ATR</fullName>
        <ecNumber>2.7.11.1</ecNumber>
    </recommendedName>
</protein>